<keyword id="KW-0963">Cytoplasm</keyword>
<keyword id="KW-0396">Initiation factor</keyword>
<keyword id="KW-0648">Protein biosynthesis</keyword>
<keyword id="KW-0694">RNA-binding</keyword>
<keyword id="KW-0699">rRNA-binding</keyword>
<dbReference type="EMBL" id="AE016823">
    <property type="protein sequence ID" value="AAS71404.1"/>
    <property type="molecule type" value="Genomic_DNA"/>
</dbReference>
<dbReference type="RefSeq" id="WP_001040194.1">
    <property type="nucleotide sequence ID" value="NC_005823.1"/>
</dbReference>
<dbReference type="SMR" id="P61690"/>
<dbReference type="GeneID" id="34315486"/>
<dbReference type="KEGG" id="lic:LIC_12851"/>
<dbReference type="HOGENOM" id="CLU_151267_1_0_12"/>
<dbReference type="Proteomes" id="UP000007037">
    <property type="component" value="Chromosome I"/>
</dbReference>
<dbReference type="GO" id="GO:0005829">
    <property type="term" value="C:cytosol"/>
    <property type="evidence" value="ECO:0007669"/>
    <property type="project" value="TreeGrafter"/>
</dbReference>
<dbReference type="GO" id="GO:0043022">
    <property type="term" value="F:ribosome binding"/>
    <property type="evidence" value="ECO:0007669"/>
    <property type="project" value="UniProtKB-UniRule"/>
</dbReference>
<dbReference type="GO" id="GO:0019843">
    <property type="term" value="F:rRNA binding"/>
    <property type="evidence" value="ECO:0007669"/>
    <property type="project" value="UniProtKB-UniRule"/>
</dbReference>
<dbReference type="GO" id="GO:0003743">
    <property type="term" value="F:translation initiation factor activity"/>
    <property type="evidence" value="ECO:0007669"/>
    <property type="project" value="UniProtKB-UniRule"/>
</dbReference>
<dbReference type="CDD" id="cd04451">
    <property type="entry name" value="S1_IF1"/>
    <property type="match status" value="1"/>
</dbReference>
<dbReference type="FunFam" id="2.40.50.140:FF:000002">
    <property type="entry name" value="Translation initiation factor IF-1"/>
    <property type="match status" value="1"/>
</dbReference>
<dbReference type="Gene3D" id="2.40.50.140">
    <property type="entry name" value="Nucleic acid-binding proteins"/>
    <property type="match status" value="1"/>
</dbReference>
<dbReference type="HAMAP" id="MF_00075">
    <property type="entry name" value="IF_1"/>
    <property type="match status" value="1"/>
</dbReference>
<dbReference type="InterPro" id="IPR012340">
    <property type="entry name" value="NA-bd_OB-fold"/>
</dbReference>
<dbReference type="InterPro" id="IPR006196">
    <property type="entry name" value="RNA-binding_domain_S1_IF1"/>
</dbReference>
<dbReference type="InterPro" id="IPR003029">
    <property type="entry name" value="S1_domain"/>
</dbReference>
<dbReference type="InterPro" id="IPR004368">
    <property type="entry name" value="TIF_IF1"/>
</dbReference>
<dbReference type="NCBIfam" id="TIGR00008">
    <property type="entry name" value="infA"/>
    <property type="match status" value="1"/>
</dbReference>
<dbReference type="PANTHER" id="PTHR33370">
    <property type="entry name" value="TRANSLATION INITIATION FACTOR IF-1, CHLOROPLASTIC"/>
    <property type="match status" value="1"/>
</dbReference>
<dbReference type="PANTHER" id="PTHR33370:SF1">
    <property type="entry name" value="TRANSLATION INITIATION FACTOR IF-1, CHLOROPLASTIC"/>
    <property type="match status" value="1"/>
</dbReference>
<dbReference type="Pfam" id="PF01176">
    <property type="entry name" value="eIF-1a"/>
    <property type="match status" value="1"/>
</dbReference>
<dbReference type="SMART" id="SM00316">
    <property type="entry name" value="S1"/>
    <property type="match status" value="1"/>
</dbReference>
<dbReference type="SUPFAM" id="SSF50249">
    <property type="entry name" value="Nucleic acid-binding proteins"/>
    <property type="match status" value="1"/>
</dbReference>
<dbReference type="PROSITE" id="PS50832">
    <property type="entry name" value="S1_IF1_TYPE"/>
    <property type="match status" value="1"/>
</dbReference>
<organism>
    <name type="scientific">Leptospira interrogans serogroup Icterohaemorrhagiae serovar copenhageni (strain Fiocruz L1-130)</name>
    <dbReference type="NCBI Taxonomy" id="267671"/>
    <lineage>
        <taxon>Bacteria</taxon>
        <taxon>Pseudomonadati</taxon>
        <taxon>Spirochaetota</taxon>
        <taxon>Spirochaetia</taxon>
        <taxon>Leptospirales</taxon>
        <taxon>Leptospiraceae</taxon>
        <taxon>Leptospira</taxon>
    </lineage>
</organism>
<name>IF1_LEPIC</name>
<proteinExistence type="inferred from homology"/>
<reference key="1">
    <citation type="journal article" date="2004" name="J. Bacteriol.">
        <title>Comparative genomics of two Leptospira interrogans serovars reveals novel insights into physiology and pathogenesis.</title>
        <authorList>
            <person name="Nascimento A.L.T.O."/>
            <person name="Ko A.I."/>
            <person name="Martins E.A.L."/>
            <person name="Monteiro-Vitorello C.B."/>
            <person name="Ho P.L."/>
            <person name="Haake D.A."/>
            <person name="Verjovski-Almeida S."/>
            <person name="Hartskeerl R.A."/>
            <person name="Marques M.V."/>
            <person name="Oliveira M.C."/>
            <person name="Menck C.F.M."/>
            <person name="Leite L.C.C."/>
            <person name="Carrer H."/>
            <person name="Coutinho L.L."/>
            <person name="Degrave W.M."/>
            <person name="Dellagostin O.A."/>
            <person name="El-Dorry H."/>
            <person name="Ferro E.S."/>
            <person name="Ferro M.I.T."/>
            <person name="Furlan L.R."/>
            <person name="Gamberini M."/>
            <person name="Giglioti E.A."/>
            <person name="Goes-Neto A."/>
            <person name="Goldman G.H."/>
            <person name="Goldman M.H.S."/>
            <person name="Harakava R."/>
            <person name="Jeronimo S.M.B."/>
            <person name="Junqueira-de-Azevedo I.L.M."/>
            <person name="Kimura E.T."/>
            <person name="Kuramae E.E."/>
            <person name="Lemos E.G.M."/>
            <person name="Lemos M.V.F."/>
            <person name="Marino C.L."/>
            <person name="Nunes L.R."/>
            <person name="de Oliveira R.C."/>
            <person name="Pereira G.G."/>
            <person name="Reis M.S."/>
            <person name="Schriefer A."/>
            <person name="Siqueira W.J."/>
            <person name="Sommer P."/>
            <person name="Tsai S.M."/>
            <person name="Simpson A.J.G."/>
            <person name="Ferro J.A."/>
            <person name="Camargo L.E.A."/>
            <person name="Kitajima J.P."/>
            <person name="Setubal J.C."/>
            <person name="Van Sluys M.A."/>
        </authorList>
    </citation>
    <scope>NUCLEOTIDE SEQUENCE [LARGE SCALE GENOMIC DNA]</scope>
    <source>
        <strain>Fiocruz L1-130</strain>
    </source>
</reference>
<accession>P61690</accession>
<protein>
    <recommendedName>
        <fullName evidence="2">Translation initiation factor IF-1</fullName>
    </recommendedName>
</protein>
<sequence>MAKEEAITVDGTVLEPLPNAMFRVELENGHKVLAHISGKMRMHYIRILPGDKVTVELSPYDLSKGRITYRKK</sequence>
<feature type="initiator methionine" description="Removed" evidence="1">
    <location>
        <position position="1"/>
    </location>
</feature>
<feature type="chain" id="PRO_0000095811" description="Translation initiation factor IF-1">
    <location>
        <begin position="2"/>
        <end position="72"/>
    </location>
</feature>
<feature type="domain" description="S1-like" evidence="2">
    <location>
        <begin position="2"/>
        <end position="72"/>
    </location>
</feature>
<evidence type="ECO:0000250" key="1"/>
<evidence type="ECO:0000255" key="2">
    <source>
        <dbReference type="HAMAP-Rule" id="MF_00075"/>
    </source>
</evidence>
<gene>
    <name evidence="2" type="primary">infA</name>
    <name type="ordered locus">LIC_12851</name>
</gene>
<comment type="function">
    <text evidence="2">One of the essential components for the initiation of protein synthesis. Stabilizes the binding of IF-2 and IF-3 on the 30S subunit to which N-formylmethionyl-tRNA(fMet) subsequently binds. Helps modulate mRNA selection, yielding the 30S pre-initiation complex (PIC). Upon addition of the 50S ribosomal subunit IF-1, IF-2 and IF-3 are released leaving the mature 70S translation initiation complex.</text>
</comment>
<comment type="subunit">
    <text evidence="2">Component of the 30S ribosomal translation pre-initiation complex which assembles on the 30S ribosome in the order IF-2 and IF-3, IF-1 and N-formylmethionyl-tRNA(fMet); mRNA recruitment can occur at any time during PIC assembly.</text>
</comment>
<comment type="subcellular location">
    <subcellularLocation>
        <location evidence="2">Cytoplasm</location>
    </subcellularLocation>
</comment>
<comment type="similarity">
    <text evidence="2">Belongs to the IF-1 family.</text>
</comment>